<keyword id="KW-0963">Cytoplasm</keyword>
<keyword id="KW-0460">Magnesium</keyword>
<keyword id="KW-0479">Metal-binding</keyword>
<keyword id="KW-0566">Pantothenate biosynthesis</keyword>
<keyword id="KW-0808">Transferase</keyword>
<organism>
    <name type="scientific">Klebsiella pneumoniae (strain 342)</name>
    <dbReference type="NCBI Taxonomy" id="507522"/>
    <lineage>
        <taxon>Bacteria</taxon>
        <taxon>Pseudomonadati</taxon>
        <taxon>Pseudomonadota</taxon>
        <taxon>Gammaproteobacteria</taxon>
        <taxon>Enterobacterales</taxon>
        <taxon>Enterobacteriaceae</taxon>
        <taxon>Klebsiella/Raoultella group</taxon>
        <taxon>Klebsiella</taxon>
        <taxon>Klebsiella pneumoniae complex</taxon>
    </lineage>
</organism>
<proteinExistence type="inferred from homology"/>
<gene>
    <name evidence="1" type="primary">panB</name>
    <name type="ordered locus">KPK_4595</name>
</gene>
<evidence type="ECO:0000255" key="1">
    <source>
        <dbReference type="HAMAP-Rule" id="MF_00156"/>
    </source>
</evidence>
<comment type="function">
    <text evidence="1">Catalyzes the reversible reaction in which hydroxymethyl group from 5,10-methylenetetrahydrofolate is transferred onto alpha-ketoisovalerate to form ketopantoate.</text>
</comment>
<comment type="catalytic activity">
    <reaction evidence="1">
        <text>3-methyl-2-oxobutanoate + (6R)-5,10-methylene-5,6,7,8-tetrahydrofolate + H2O = 2-dehydropantoate + (6S)-5,6,7,8-tetrahydrofolate</text>
        <dbReference type="Rhea" id="RHEA:11824"/>
        <dbReference type="ChEBI" id="CHEBI:11561"/>
        <dbReference type="ChEBI" id="CHEBI:11851"/>
        <dbReference type="ChEBI" id="CHEBI:15377"/>
        <dbReference type="ChEBI" id="CHEBI:15636"/>
        <dbReference type="ChEBI" id="CHEBI:57453"/>
        <dbReference type="EC" id="2.1.2.11"/>
    </reaction>
</comment>
<comment type="cofactor">
    <cofactor evidence="1">
        <name>Mg(2+)</name>
        <dbReference type="ChEBI" id="CHEBI:18420"/>
    </cofactor>
    <text evidence="1">Binds 1 Mg(2+) ion per subunit.</text>
</comment>
<comment type="pathway">
    <text evidence="1">Cofactor biosynthesis; (R)-pantothenate biosynthesis; (R)-pantoate from 3-methyl-2-oxobutanoate: step 1/2.</text>
</comment>
<comment type="subunit">
    <text evidence="1">Homodecamer; pentamer of dimers.</text>
</comment>
<comment type="subcellular location">
    <subcellularLocation>
        <location evidence="1">Cytoplasm</location>
    </subcellularLocation>
</comment>
<comment type="similarity">
    <text evidence="1">Belongs to the PanB family.</text>
</comment>
<name>PANB_KLEP3</name>
<feature type="chain" id="PRO_1000096977" description="3-methyl-2-oxobutanoate hydroxymethyltransferase">
    <location>
        <begin position="1"/>
        <end position="263"/>
    </location>
</feature>
<feature type="active site" description="Proton acceptor" evidence="1">
    <location>
        <position position="180"/>
    </location>
</feature>
<feature type="binding site" evidence="1">
    <location>
        <begin position="45"/>
        <end position="46"/>
    </location>
    <ligand>
        <name>3-methyl-2-oxobutanoate</name>
        <dbReference type="ChEBI" id="CHEBI:11851"/>
    </ligand>
</feature>
<feature type="binding site" evidence="1">
    <location>
        <position position="45"/>
    </location>
    <ligand>
        <name>Mg(2+)</name>
        <dbReference type="ChEBI" id="CHEBI:18420"/>
    </ligand>
</feature>
<feature type="binding site" evidence="1">
    <location>
        <position position="84"/>
    </location>
    <ligand>
        <name>3-methyl-2-oxobutanoate</name>
        <dbReference type="ChEBI" id="CHEBI:11851"/>
    </ligand>
</feature>
<feature type="binding site" evidence="1">
    <location>
        <position position="84"/>
    </location>
    <ligand>
        <name>Mg(2+)</name>
        <dbReference type="ChEBI" id="CHEBI:18420"/>
    </ligand>
</feature>
<feature type="binding site" evidence="1">
    <location>
        <position position="112"/>
    </location>
    <ligand>
        <name>3-methyl-2-oxobutanoate</name>
        <dbReference type="ChEBI" id="CHEBI:11851"/>
    </ligand>
</feature>
<feature type="binding site" evidence="1">
    <location>
        <position position="114"/>
    </location>
    <ligand>
        <name>Mg(2+)</name>
        <dbReference type="ChEBI" id="CHEBI:18420"/>
    </ligand>
</feature>
<protein>
    <recommendedName>
        <fullName evidence="1">3-methyl-2-oxobutanoate hydroxymethyltransferase</fullName>
        <ecNumber evidence="1">2.1.2.11</ecNumber>
    </recommendedName>
    <alternativeName>
        <fullName evidence="1">Ketopantoate hydroxymethyltransferase</fullName>
        <shortName evidence="1">KPHMT</shortName>
    </alternativeName>
</protein>
<dbReference type="EC" id="2.1.2.11" evidence="1"/>
<dbReference type="EMBL" id="CP000964">
    <property type="protein sequence ID" value="ACI06600.1"/>
    <property type="molecule type" value="Genomic_DNA"/>
</dbReference>
<dbReference type="SMR" id="B5Y1P5"/>
<dbReference type="KEGG" id="kpe:KPK_4595"/>
<dbReference type="HOGENOM" id="CLU_036645_1_0_6"/>
<dbReference type="UniPathway" id="UPA00028">
    <property type="reaction ID" value="UER00003"/>
</dbReference>
<dbReference type="Proteomes" id="UP000001734">
    <property type="component" value="Chromosome"/>
</dbReference>
<dbReference type="GO" id="GO:0005737">
    <property type="term" value="C:cytoplasm"/>
    <property type="evidence" value="ECO:0007669"/>
    <property type="project" value="UniProtKB-SubCell"/>
</dbReference>
<dbReference type="GO" id="GO:0003864">
    <property type="term" value="F:3-methyl-2-oxobutanoate hydroxymethyltransferase activity"/>
    <property type="evidence" value="ECO:0007669"/>
    <property type="project" value="UniProtKB-UniRule"/>
</dbReference>
<dbReference type="GO" id="GO:0000287">
    <property type="term" value="F:magnesium ion binding"/>
    <property type="evidence" value="ECO:0007669"/>
    <property type="project" value="TreeGrafter"/>
</dbReference>
<dbReference type="GO" id="GO:0015940">
    <property type="term" value="P:pantothenate biosynthetic process"/>
    <property type="evidence" value="ECO:0007669"/>
    <property type="project" value="UniProtKB-UniRule"/>
</dbReference>
<dbReference type="CDD" id="cd06557">
    <property type="entry name" value="KPHMT-like"/>
    <property type="match status" value="1"/>
</dbReference>
<dbReference type="FunFam" id="3.20.20.60:FF:000003">
    <property type="entry name" value="3-methyl-2-oxobutanoate hydroxymethyltransferase"/>
    <property type="match status" value="1"/>
</dbReference>
<dbReference type="Gene3D" id="3.20.20.60">
    <property type="entry name" value="Phosphoenolpyruvate-binding domains"/>
    <property type="match status" value="1"/>
</dbReference>
<dbReference type="HAMAP" id="MF_00156">
    <property type="entry name" value="PanB"/>
    <property type="match status" value="1"/>
</dbReference>
<dbReference type="InterPro" id="IPR003700">
    <property type="entry name" value="Pantoate_hydroxy_MeTrfase"/>
</dbReference>
<dbReference type="InterPro" id="IPR015813">
    <property type="entry name" value="Pyrv/PenolPyrv_kinase-like_dom"/>
</dbReference>
<dbReference type="InterPro" id="IPR040442">
    <property type="entry name" value="Pyrv_kinase-like_dom_sf"/>
</dbReference>
<dbReference type="NCBIfam" id="TIGR00222">
    <property type="entry name" value="panB"/>
    <property type="match status" value="1"/>
</dbReference>
<dbReference type="NCBIfam" id="NF001452">
    <property type="entry name" value="PRK00311.1"/>
    <property type="match status" value="1"/>
</dbReference>
<dbReference type="PANTHER" id="PTHR20881">
    <property type="entry name" value="3-METHYL-2-OXOBUTANOATE HYDROXYMETHYLTRANSFERASE"/>
    <property type="match status" value="1"/>
</dbReference>
<dbReference type="PANTHER" id="PTHR20881:SF0">
    <property type="entry name" value="3-METHYL-2-OXOBUTANOATE HYDROXYMETHYLTRANSFERASE"/>
    <property type="match status" value="1"/>
</dbReference>
<dbReference type="Pfam" id="PF02548">
    <property type="entry name" value="Pantoate_transf"/>
    <property type="match status" value="1"/>
</dbReference>
<dbReference type="PIRSF" id="PIRSF000388">
    <property type="entry name" value="Pantoate_hydroxy_MeTrfase"/>
    <property type="match status" value="1"/>
</dbReference>
<dbReference type="SUPFAM" id="SSF51621">
    <property type="entry name" value="Phosphoenolpyruvate/pyruvate domain"/>
    <property type="match status" value="1"/>
</dbReference>
<sequence length="263" mass="28043">MKPTTIALLQKCKQEKKRFATITAYDHSFAKLFADEGINVLLVGDSLGMTVQGHDSTLPVTVEDIAYHTRAVRRGAPNSLLLADLPFMAYATPEQTFENAAIVMRAGANMVKLEGGAWLADTVKMLAERAVPVCGHLGLTPQSVNVFGGYKVQGRGDAAQTLFDDALALEAAGAQLLVLECVPVELAKRITDALTIPVIGIGAGNVTDGQILVMHDAFGITGGHIPKFAKNFLAEAGDIRAAVRQYIAEVESGVYPGEEHSFH</sequence>
<accession>B5Y1P5</accession>
<reference key="1">
    <citation type="journal article" date="2008" name="PLoS Genet.">
        <title>Complete genome sequence of the N2-fixing broad host range endophyte Klebsiella pneumoniae 342 and virulence predictions verified in mice.</title>
        <authorList>
            <person name="Fouts D.E."/>
            <person name="Tyler H.L."/>
            <person name="DeBoy R.T."/>
            <person name="Daugherty S."/>
            <person name="Ren Q."/>
            <person name="Badger J.H."/>
            <person name="Durkin A.S."/>
            <person name="Huot H."/>
            <person name="Shrivastava S."/>
            <person name="Kothari S."/>
            <person name="Dodson R.J."/>
            <person name="Mohamoud Y."/>
            <person name="Khouri H."/>
            <person name="Roesch L.F.W."/>
            <person name="Krogfelt K.A."/>
            <person name="Struve C."/>
            <person name="Triplett E.W."/>
            <person name="Methe B.A."/>
        </authorList>
    </citation>
    <scope>NUCLEOTIDE SEQUENCE [LARGE SCALE GENOMIC DNA]</scope>
    <source>
        <strain>342</strain>
    </source>
</reference>